<keyword id="KW-0963">Cytoplasm</keyword>
<keyword id="KW-0369">Histidine metabolism</keyword>
<keyword id="KW-0378">Hydrolase</keyword>
<keyword id="KW-0408">Iron</keyword>
<keyword id="KW-0479">Metal-binding</keyword>
<keyword id="KW-1185">Reference proteome</keyword>
<keyword id="KW-0862">Zinc</keyword>
<gene>
    <name evidence="1" type="primary">hutI</name>
    <name type="ordered locus">plu3197</name>
</gene>
<reference key="1">
    <citation type="journal article" date="2003" name="Nat. Biotechnol.">
        <title>The genome sequence of the entomopathogenic bacterium Photorhabdus luminescens.</title>
        <authorList>
            <person name="Duchaud E."/>
            <person name="Rusniok C."/>
            <person name="Frangeul L."/>
            <person name="Buchrieser C."/>
            <person name="Givaudan A."/>
            <person name="Taourit S."/>
            <person name="Bocs S."/>
            <person name="Boursaux-Eude C."/>
            <person name="Chandler M."/>
            <person name="Charles J.-F."/>
            <person name="Dassa E."/>
            <person name="Derose R."/>
            <person name="Derzelle S."/>
            <person name="Freyssinet G."/>
            <person name="Gaudriault S."/>
            <person name="Medigue C."/>
            <person name="Lanois A."/>
            <person name="Powell K."/>
            <person name="Siguier P."/>
            <person name="Vincent R."/>
            <person name="Wingate V."/>
            <person name="Zouine M."/>
            <person name="Glaser P."/>
            <person name="Boemare N."/>
            <person name="Danchin A."/>
            <person name="Kunst F."/>
        </authorList>
    </citation>
    <scope>NUCLEOTIDE SEQUENCE [LARGE SCALE GENOMIC DNA]</scope>
    <source>
        <strain>DSM 15139 / CIP 105565 / TT01</strain>
    </source>
</reference>
<sequence>MVIELRDTDIIWRNARLATMDPAVNAAYGLLKEYDLVVRDDKILAILPTAALQTSRCQVIDVQQRLITPGLIDCHTHLVFGGNRAYEWEQRLNGMSYAELSAQGGGINATVSATRASSHEQLERSAQQRLTAFMAEGVTTIEIKSGYGLNLENEEKLLQVVQHLAQHNPIEISPTLLAAHTCPPEYKHNPDAYMDLICEDILPQLWQKGLFEAVDVFCESVGFNLAQTERLFQAAQRWNIPVKGHVEQLSHLGGSELVARYHGLSVDHIEYLDQAGVESLSHSGTVAVLLPGAFYFLQETRCPPIDLLRQFNVPIAVSTDFNPGTSPFASLRMAMNMACVQFGLTPEEVWLGVTRHAARALGREPRHGQLRAGAYADFVVWDAENPVDIFYELGHNPLNTRVFRGVMTHSSIYNR</sequence>
<dbReference type="EC" id="3.5.2.7" evidence="1"/>
<dbReference type="EMBL" id="BX571869">
    <property type="protein sequence ID" value="CAE15571.1"/>
    <property type="molecule type" value="Genomic_DNA"/>
</dbReference>
<dbReference type="RefSeq" id="WP_011147404.1">
    <property type="nucleotide sequence ID" value="NC_005126.1"/>
</dbReference>
<dbReference type="SMR" id="Q7N291"/>
<dbReference type="STRING" id="243265.plu3197"/>
<dbReference type="GeneID" id="48849457"/>
<dbReference type="KEGG" id="plu:plu3197"/>
<dbReference type="eggNOG" id="COG1228">
    <property type="taxonomic scope" value="Bacteria"/>
</dbReference>
<dbReference type="HOGENOM" id="CLU_041647_0_0_6"/>
<dbReference type="OrthoDB" id="9776455at2"/>
<dbReference type="UniPathway" id="UPA00379">
    <property type="reaction ID" value="UER00551"/>
</dbReference>
<dbReference type="Proteomes" id="UP000002514">
    <property type="component" value="Chromosome"/>
</dbReference>
<dbReference type="GO" id="GO:0005737">
    <property type="term" value="C:cytoplasm"/>
    <property type="evidence" value="ECO:0007669"/>
    <property type="project" value="UniProtKB-SubCell"/>
</dbReference>
<dbReference type="GO" id="GO:0050480">
    <property type="term" value="F:imidazolonepropionase activity"/>
    <property type="evidence" value="ECO:0007669"/>
    <property type="project" value="UniProtKB-UniRule"/>
</dbReference>
<dbReference type="GO" id="GO:0005506">
    <property type="term" value="F:iron ion binding"/>
    <property type="evidence" value="ECO:0007669"/>
    <property type="project" value="UniProtKB-UniRule"/>
</dbReference>
<dbReference type="GO" id="GO:0008270">
    <property type="term" value="F:zinc ion binding"/>
    <property type="evidence" value="ECO:0007669"/>
    <property type="project" value="UniProtKB-UniRule"/>
</dbReference>
<dbReference type="GO" id="GO:0019556">
    <property type="term" value="P:L-histidine catabolic process to glutamate and formamide"/>
    <property type="evidence" value="ECO:0007669"/>
    <property type="project" value="UniProtKB-UniPathway"/>
</dbReference>
<dbReference type="GO" id="GO:0019557">
    <property type="term" value="P:L-histidine catabolic process to glutamate and formate"/>
    <property type="evidence" value="ECO:0007669"/>
    <property type="project" value="UniProtKB-UniPathway"/>
</dbReference>
<dbReference type="CDD" id="cd01296">
    <property type="entry name" value="Imidazolone-5PH"/>
    <property type="match status" value="1"/>
</dbReference>
<dbReference type="FunFam" id="3.20.20.140:FF:000007">
    <property type="entry name" value="Imidazolonepropionase"/>
    <property type="match status" value="1"/>
</dbReference>
<dbReference type="Gene3D" id="3.20.20.140">
    <property type="entry name" value="Metal-dependent hydrolases"/>
    <property type="match status" value="1"/>
</dbReference>
<dbReference type="Gene3D" id="2.30.40.10">
    <property type="entry name" value="Urease, subunit C, domain 1"/>
    <property type="match status" value="1"/>
</dbReference>
<dbReference type="HAMAP" id="MF_00372">
    <property type="entry name" value="HutI"/>
    <property type="match status" value="1"/>
</dbReference>
<dbReference type="InterPro" id="IPR006680">
    <property type="entry name" value="Amidohydro-rel"/>
</dbReference>
<dbReference type="InterPro" id="IPR005920">
    <property type="entry name" value="HutI"/>
</dbReference>
<dbReference type="InterPro" id="IPR011059">
    <property type="entry name" value="Metal-dep_hydrolase_composite"/>
</dbReference>
<dbReference type="InterPro" id="IPR032466">
    <property type="entry name" value="Metal_Hydrolase"/>
</dbReference>
<dbReference type="NCBIfam" id="TIGR01224">
    <property type="entry name" value="hutI"/>
    <property type="match status" value="1"/>
</dbReference>
<dbReference type="PANTHER" id="PTHR42752">
    <property type="entry name" value="IMIDAZOLONEPROPIONASE"/>
    <property type="match status" value="1"/>
</dbReference>
<dbReference type="PANTHER" id="PTHR42752:SF1">
    <property type="entry name" value="IMIDAZOLONEPROPIONASE-RELATED"/>
    <property type="match status" value="1"/>
</dbReference>
<dbReference type="Pfam" id="PF01979">
    <property type="entry name" value="Amidohydro_1"/>
    <property type="match status" value="1"/>
</dbReference>
<dbReference type="SUPFAM" id="SSF51338">
    <property type="entry name" value="Composite domain of metallo-dependent hydrolases"/>
    <property type="match status" value="1"/>
</dbReference>
<dbReference type="SUPFAM" id="SSF51556">
    <property type="entry name" value="Metallo-dependent hydrolases"/>
    <property type="match status" value="1"/>
</dbReference>
<proteinExistence type="inferred from homology"/>
<evidence type="ECO:0000255" key="1">
    <source>
        <dbReference type="HAMAP-Rule" id="MF_00372"/>
    </source>
</evidence>
<accession>Q7N291</accession>
<comment type="function">
    <text evidence="1">Catalyzes the hydrolytic cleavage of the carbon-nitrogen bond in imidazolone-5-propanoate to yield N-formimidoyl-L-glutamate. It is the third step in the universal histidine degradation pathway.</text>
</comment>
<comment type="catalytic activity">
    <reaction evidence="1">
        <text>4-imidazolone-5-propanoate + H2O = N-formimidoyl-L-glutamate</text>
        <dbReference type="Rhea" id="RHEA:23660"/>
        <dbReference type="ChEBI" id="CHEBI:15377"/>
        <dbReference type="ChEBI" id="CHEBI:58928"/>
        <dbReference type="ChEBI" id="CHEBI:77893"/>
        <dbReference type="EC" id="3.5.2.7"/>
    </reaction>
</comment>
<comment type="cofactor">
    <cofactor evidence="1">
        <name>Zn(2+)</name>
        <dbReference type="ChEBI" id="CHEBI:29105"/>
    </cofactor>
    <cofactor evidence="1">
        <name>Fe(3+)</name>
        <dbReference type="ChEBI" id="CHEBI:29034"/>
    </cofactor>
    <text evidence="1">Binds 1 zinc or iron ion per subunit.</text>
</comment>
<comment type="pathway">
    <text evidence="1">Amino-acid degradation; L-histidine degradation into L-glutamate; N-formimidoyl-L-glutamate from L-histidine: step 3/3.</text>
</comment>
<comment type="subcellular location">
    <subcellularLocation>
        <location evidence="1">Cytoplasm</location>
    </subcellularLocation>
</comment>
<comment type="similarity">
    <text evidence="1">Belongs to the metallo-dependent hydrolases superfamily. HutI family.</text>
</comment>
<feature type="chain" id="PRO_0000306480" description="Imidazolonepropionase">
    <location>
        <begin position="1"/>
        <end position="415"/>
    </location>
</feature>
<feature type="binding site" evidence="1">
    <location>
        <position position="75"/>
    </location>
    <ligand>
        <name>Fe(3+)</name>
        <dbReference type="ChEBI" id="CHEBI:29034"/>
    </ligand>
</feature>
<feature type="binding site" evidence="1">
    <location>
        <position position="75"/>
    </location>
    <ligand>
        <name>Zn(2+)</name>
        <dbReference type="ChEBI" id="CHEBI:29105"/>
    </ligand>
</feature>
<feature type="binding site" evidence="1">
    <location>
        <position position="77"/>
    </location>
    <ligand>
        <name>Fe(3+)</name>
        <dbReference type="ChEBI" id="CHEBI:29034"/>
    </ligand>
</feature>
<feature type="binding site" evidence="1">
    <location>
        <position position="77"/>
    </location>
    <ligand>
        <name>Zn(2+)</name>
        <dbReference type="ChEBI" id="CHEBI:29105"/>
    </ligand>
</feature>
<feature type="binding site" evidence="1">
    <location>
        <position position="84"/>
    </location>
    <ligand>
        <name>4-imidazolone-5-propanoate</name>
        <dbReference type="ChEBI" id="CHEBI:77893"/>
    </ligand>
</feature>
<feature type="binding site" evidence="1">
    <location>
        <position position="147"/>
    </location>
    <ligand>
        <name>4-imidazolone-5-propanoate</name>
        <dbReference type="ChEBI" id="CHEBI:77893"/>
    </ligand>
</feature>
<feature type="binding site" evidence="1">
    <location>
        <position position="147"/>
    </location>
    <ligand>
        <name>N-formimidoyl-L-glutamate</name>
        <dbReference type="ChEBI" id="CHEBI:58928"/>
    </ligand>
</feature>
<feature type="binding site" evidence="1">
    <location>
        <position position="180"/>
    </location>
    <ligand>
        <name>4-imidazolone-5-propanoate</name>
        <dbReference type="ChEBI" id="CHEBI:77893"/>
    </ligand>
</feature>
<feature type="binding site" evidence="1">
    <location>
        <position position="245"/>
    </location>
    <ligand>
        <name>Fe(3+)</name>
        <dbReference type="ChEBI" id="CHEBI:29034"/>
    </ligand>
</feature>
<feature type="binding site" evidence="1">
    <location>
        <position position="245"/>
    </location>
    <ligand>
        <name>Zn(2+)</name>
        <dbReference type="ChEBI" id="CHEBI:29105"/>
    </ligand>
</feature>
<feature type="binding site" evidence="1">
    <location>
        <position position="248"/>
    </location>
    <ligand>
        <name>4-imidazolone-5-propanoate</name>
        <dbReference type="ChEBI" id="CHEBI:77893"/>
    </ligand>
</feature>
<feature type="binding site" evidence="1">
    <location>
        <position position="320"/>
    </location>
    <ligand>
        <name>Fe(3+)</name>
        <dbReference type="ChEBI" id="CHEBI:29034"/>
    </ligand>
</feature>
<feature type="binding site" evidence="1">
    <location>
        <position position="320"/>
    </location>
    <ligand>
        <name>Zn(2+)</name>
        <dbReference type="ChEBI" id="CHEBI:29105"/>
    </ligand>
</feature>
<feature type="binding site" evidence="1">
    <location>
        <position position="322"/>
    </location>
    <ligand>
        <name>N-formimidoyl-L-glutamate</name>
        <dbReference type="ChEBI" id="CHEBI:58928"/>
    </ligand>
</feature>
<feature type="binding site" evidence="1">
    <location>
        <position position="324"/>
    </location>
    <ligand>
        <name>N-formimidoyl-L-glutamate</name>
        <dbReference type="ChEBI" id="CHEBI:58928"/>
    </ligand>
</feature>
<feature type="binding site" evidence="1">
    <location>
        <position position="325"/>
    </location>
    <ligand>
        <name>4-imidazolone-5-propanoate</name>
        <dbReference type="ChEBI" id="CHEBI:77893"/>
    </ligand>
</feature>
<protein>
    <recommendedName>
        <fullName evidence="1">Imidazolonepropionase</fullName>
        <ecNumber evidence="1">3.5.2.7</ecNumber>
    </recommendedName>
    <alternativeName>
        <fullName evidence="1">Imidazolone-5-propionate hydrolase</fullName>
    </alternativeName>
</protein>
<name>HUTI_PHOLL</name>
<organism>
    <name type="scientific">Photorhabdus laumondii subsp. laumondii (strain DSM 15139 / CIP 105565 / TT01)</name>
    <name type="common">Photorhabdus luminescens subsp. laumondii</name>
    <dbReference type="NCBI Taxonomy" id="243265"/>
    <lineage>
        <taxon>Bacteria</taxon>
        <taxon>Pseudomonadati</taxon>
        <taxon>Pseudomonadota</taxon>
        <taxon>Gammaproteobacteria</taxon>
        <taxon>Enterobacterales</taxon>
        <taxon>Morganellaceae</taxon>
        <taxon>Photorhabdus</taxon>
    </lineage>
</organism>